<gene>
    <name evidence="1" type="primary">rpoA</name>
    <name type="ordered locus">CLD_1053</name>
</gene>
<protein>
    <recommendedName>
        <fullName evidence="1">DNA-directed RNA polymerase subunit alpha</fullName>
        <shortName evidence="1">RNAP subunit alpha</shortName>
        <ecNumber evidence="1">2.7.7.6</ecNumber>
    </recommendedName>
    <alternativeName>
        <fullName evidence="1">RNA polymerase subunit alpha</fullName>
    </alternativeName>
    <alternativeName>
        <fullName evidence="1">Transcriptase subunit alpha</fullName>
    </alternativeName>
</protein>
<organism>
    <name type="scientific">Clostridium botulinum (strain Okra / Type B1)</name>
    <dbReference type="NCBI Taxonomy" id="498213"/>
    <lineage>
        <taxon>Bacteria</taxon>
        <taxon>Bacillati</taxon>
        <taxon>Bacillota</taxon>
        <taxon>Clostridia</taxon>
        <taxon>Eubacteriales</taxon>
        <taxon>Clostridiaceae</taxon>
        <taxon>Clostridium</taxon>
    </lineage>
</organism>
<evidence type="ECO:0000255" key="1">
    <source>
        <dbReference type="HAMAP-Rule" id="MF_00059"/>
    </source>
</evidence>
<sequence length="315" mass="35397">MLEIEKPKIECVENAEDGSYGKFVIEPLERGYGITLGNALRRILLSSLPGVAADHIKIDSVLHEFSTVQGVKEDVTELILNIKCLALTMNGEGPKTIYIDEVGPKEVTAADIKTDGDVEVINKDLHIATLDENGKMYMEINVNRGRGYVTQNKNKTKDMPIGSIAVDSIYTPVKRVNFSVENTRVGQITDYDKLTIEVWTNGTIRPEEAVSLSAKILIEHFKLFMTLTDHADDMEIMVEKEEDKKEKVLEMTIEELDLSVRSYNCLKRAGINTVQELCERSMDDMMKVRNLGKKSLEEVEQKLEALGLGLRKSED</sequence>
<proteinExistence type="inferred from homology"/>
<keyword id="KW-0240">DNA-directed RNA polymerase</keyword>
<keyword id="KW-0548">Nucleotidyltransferase</keyword>
<keyword id="KW-0804">Transcription</keyword>
<keyword id="KW-0808">Transferase</keyword>
<comment type="function">
    <text evidence="1">DNA-dependent RNA polymerase catalyzes the transcription of DNA into RNA using the four ribonucleoside triphosphates as substrates.</text>
</comment>
<comment type="catalytic activity">
    <reaction evidence="1">
        <text>RNA(n) + a ribonucleoside 5'-triphosphate = RNA(n+1) + diphosphate</text>
        <dbReference type="Rhea" id="RHEA:21248"/>
        <dbReference type="Rhea" id="RHEA-COMP:14527"/>
        <dbReference type="Rhea" id="RHEA-COMP:17342"/>
        <dbReference type="ChEBI" id="CHEBI:33019"/>
        <dbReference type="ChEBI" id="CHEBI:61557"/>
        <dbReference type="ChEBI" id="CHEBI:140395"/>
        <dbReference type="EC" id="2.7.7.6"/>
    </reaction>
</comment>
<comment type="subunit">
    <text evidence="1">Homodimer. The RNAP catalytic core consists of 2 alpha, 1 beta, 1 beta' and 1 omega subunit. When a sigma factor is associated with the core the holoenzyme is formed, which can initiate transcription.</text>
</comment>
<comment type="domain">
    <text evidence="1">The N-terminal domain is essential for RNAP assembly and basal transcription, whereas the C-terminal domain is involved in interaction with transcriptional regulators and with upstream promoter elements.</text>
</comment>
<comment type="similarity">
    <text evidence="1">Belongs to the RNA polymerase alpha chain family.</text>
</comment>
<accession>B1IGC5</accession>
<dbReference type="EC" id="2.7.7.6" evidence="1"/>
<dbReference type="EMBL" id="CP000939">
    <property type="protein sequence ID" value="ACA45485.1"/>
    <property type="molecule type" value="Genomic_DNA"/>
</dbReference>
<dbReference type="RefSeq" id="WP_003357472.1">
    <property type="nucleotide sequence ID" value="NC_010516.1"/>
</dbReference>
<dbReference type="SMR" id="B1IGC5"/>
<dbReference type="KEGG" id="cbb:CLD_1053"/>
<dbReference type="HOGENOM" id="CLU_053084_0_1_9"/>
<dbReference type="Proteomes" id="UP000008541">
    <property type="component" value="Chromosome"/>
</dbReference>
<dbReference type="GO" id="GO:0005737">
    <property type="term" value="C:cytoplasm"/>
    <property type="evidence" value="ECO:0007669"/>
    <property type="project" value="UniProtKB-ARBA"/>
</dbReference>
<dbReference type="GO" id="GO:0000428">
    <property type="term" value="C:DNA-directed RNA polymerase complex"/>
    <property type="evidence" value="ECO:0007669"/>
    <property type="project" value="UniProtKB-KW"/>
</dbReference>
<dbReference type="GO" id="GO:0003677">
    <property type="term" value="F:DNA binding"/>
    <property type="evidence" value="ECO:0007669"/>
    <property type="project" value="UniProtKB-UniRule"/>
</dbReference>
<dbReference type="GO" id="GO:0003899">
    <property type="term" value="F:DNA-directed RNA polymerase activity"/>
    <property type="evidence" value="ECO:0007669"/>
    <property type="project" value="UniProtKB-UniRule"/>
</dbReference>
<dbReference type="GO" id="GO:0046983">
    <property type="term" value="F:protein dimerization activity"/>
    <property type="evidence" value="ECO:0007669"/>
    <property type="project" value="InterPro"/>
</dbReference>
<dbReference type="GO" id="GO:0006351">
    <property type="term" value="P:DNA-templated transcription"/>
    <property type="evidence" value="ECO:0007669"/>
    <property type="project" value="UniProtKB-UniRule"/>
</dbReference>
<dbReference type="CDD" id="cd06928">
    <property type="entry name" value="RNAP_alpha_NTD"/>
    <property type="match status" value="1"/>
</dbReference>
<dbReference type="FunFam" id="1.10.150.20:FF:000001">
    <property type="entry name" value="DNA-directed RNA polymerase subunit alpha"/>
    <property type="match status" value="1"/>
</dbReference>
<dbReference type="FunFam" id="2.170.120.12:FF:000001">
    <property type="entry name" value="DNA-directed RNA polymerase subunit alpha"/>
    <property type="match status" value="1"/>
</dbReference>
<dbReference type="Gene3D" id="1.10.150.20">
    <property type="entry name" value="5' to 3' exonuclease, C-terminal subdomain"/>
    <property type="match status" value="1"/>
</dbReference>
<dbReference type="Gene3D" id="2.170.120.12">
    <property type="entry name" value="DNA-directed RNA polymerase, insert domain"/>
    <property type="match status" value="1"/>
</dbReference>
<dbReference type="Gene3D" id="3.30.1360.10">
    <property type="entry name" value="RNA polymerase, RBP11-like subunit"/>
    <property type="match status" value="1"/>
</dbReference>
<dbReference type="HAMAP" id="MF_00059">
    <property type="entry name" value="RNApol_bact_RpoA"/>
    <property type="match status" value="1"/>
</dbReference>
<dbReference type="InterPro" id="IPR011262">
    <property type="entry name" value="DNA-dir_RNA_pol_insert"/>
</dbReference>
<dbReference type="InterPro" id="IPR011263">
    <property type="entry name" value="DNA-dir_RNA_pol_RpoA/D/Rpb3"/>
</dbReference>
<dbReference type="InterPro" id="IPR011773">
    <property type="entry name" value="DNA-dir_RpoA"/>
</dbReference>
<dbReference type="InterPro" id="IPR036603">
    <property type="entry name" value="RBP11-like"/>
</dbReference>
<dbReference type="InterPro" id="IPR011260">
    <property type="entry name" value="RNAP_asu_C"/>
</dbReference>
<dbReference type="InterPro" id="IPR036643">
    <property type="entry name" value="RNApol_insert_sf"/>
</dbReference>
<dbReference type="NCBIfam" id="NF003513">
    <property type="entry name" value="PRK05182.1-2"/>
    <property type="match status" value="1"/>
</dbReference>
<dbReference type="NCBIfam" id="NF003515">
    <property type="entry name" value="PRK05182.2-1"/>
    <property type="match status" value="1"/>
</dbReference>
<dbReference type="NCBIfam" id="NF003516">
    <property type="entry name" value="PRK05182.2-2"/>
    <property type="match status" value="1"/>
</dbReference>
<dbReference type="NCBIfam" id="NF003519">
    <property type="entry name" value="PRK05182.2-5"/>
    <property type="match status" value="1"/>
</dbReference>
<dbReference type="NCBIfam" id="TIGR02027">
    <property type="entry name" value="rpoA"/>
    <property type="match status" value="1"/>
</dbReference>
<dbReference type="Pfam" id="PF01000">
    <property type="entry name" value="RNA_pol_A_bac"/>
    <property type="match status" value="1"/>
</dbReference>
<dbReference type="Pfam" id="PF03118">
    <property type="entry name" value="RNA_pol_A_CTD"/>
    <property type="match status" value="1"/>
</dbReference>
<dbReference type="Pfam" id="PF01193">
    <property type="entry name" value="RNA_pol_L"/>
    <property type="match status" value="1"/>
</dbReference>
<dbReference type="SMART" id="SM00662">
    <property type="entry name" value="RPOLD"/>
    <property type="match status" value="1"/>
</dbReference>
<dbReference type="SUPFAM" id="SSF47789">
    <property type="entry name" value="C-terminal domain of RNA polymerase alpha subunit"/>
    <property type="match status" value="1"/>
</dbReference>
<dbReference type="SUPFAM" id="SSF56553">
    <property type="entry name" value="Insert subdomain of RNA polymerase alpha subunit"/>
    <property type="match status" value="1"/>
</dbReference>
<dbReference type="SUPFAM" id="SSF55257">
    <property type="entry name" value="RBP11-like subunits of RNA polymerase"/>
    <property type="match status" value="1"/>
</dbReference>
<reference key="1">
    <citation type="journal article" date="2007" name="PLoS ONE">
        <title>Analysis of the neurotoxin complex genes in Clostridium botulinum A1-A4 and B1 strains: BoNT/A3, /Ba4 and /B1 clusters are located within plasmids.</title>
        <authorList>
            <person name="Smith T.J."/>
            <person name="Hill K.K."/>
            <person name="Foley B.T."/>
            <person name="Detter J.C."/>
            <person name="Munk A.C."/>
            <person name="Bruce D.C."/>
            <person name="Doggett N.A."/>
            <person name="Smith L.A."/>
            <person name="Marks J.D."/>
            <person name="Xie G."/>
            <person name="Brettin T.S."/>
        </authorList>
    </citation>
    <scope>NUCLEOTIDE SEQUENCE [LARGE SCALE GENOMIC DNA]</scope>
    <source>
        <strain>Okra / Type B1</strain>
    </source>
</reference>
<feature type="chain" id="PRO_1000091940" description="DNA-directed RNA polymerase subunit alpha">
    <location>
        <begin position="1"/>
        <end position="315"/>
    </location>
</feature>
<feature type="region of interest" description="Alpha N-terminal domain (alpha-NTD)" evidence="1">
    <location>
        <begin position="1"/>
        <end position="228"/>
    </location>
</feature>
<feature type="region of interest" description="Alpha C-terminal domain (alpha-CTD)" evidence="1">
    <location>
        <begin position="245"/>
        <end position="315"/>
    </location>
</feature>
<name>RPOA_CLOBK</name>